<sequence length="514" mass="52830">MTHPVPDTGPASENMAPHRLRARPLGLFLPQQQPAVVMRTDCYICRSEGLAARSQVLIQAGGREILASLLHSSGEMIAPGEIGLSESAAAALGVAPGDAVSVRHAPPIDSFGALRGRVYGNRLDGAAFRSIVDDIVAGRYSDVHLSAFVTACSAFPLDHAETVALTGAMVASGERLAWGSDVVVDKHSVGGLPGNRTTPIVVAIVAALGLIMPKTSSRAITSPAGTADTMETLAPVNLDVGAIRRVVDHEGGCIVWGGAVSLSPADDIIIGVERVLDLDAAGQLVASVLSKKLAAGATHLVVDMPIGPTAKVRSPADAAALSGALQKVAAEFGLILKVMQGDGREPIGRGIGPALEARDILAVLEGRDPPPDLARRACELAGALIELAGRASPGTGAALAAQVLADGSAWSKFQRICEAQGGMRTPPLSNHRHVMTAQRPGRVSAIDNRRLAKLAKLAGAPAAKSAGLEMHVRLGSAVETGTPLLTVHAESQGELAYALAYAEAVGPILELSDR</sequence>
<organism>
    <name type="scientific">Sphingopyxis alaskensis (strain DSM 13593 / LMG 18877 / RB2256)</name>
    <name type="common">Sphingomonas alaskensis</name>
    <dbReference type="NCBI Taxonomy" id="317655"/>
    <lineage>
        <taxon>Bacteria</taxon>
        <taxon>Pseudomonadati</taxon>
        <taxon>Pseudomonadota</taxon>
        <taxon>Alphaproteobacteria</taxon>
        <taxon>Sphingomonadales</taxon>
        <taxon>Sphingomonadaceae</taxon>
        <taxon>Sphingopyxis</taxon>
    </lineage>
</organism>
<feature type="chain" id="PRO_0000314718" description="Putative thymidine phosphorylase">
    <location>
        <begin position="1"/>
        <end position="514"/>
    </location>
</feature>
<gene>
    <name type="ordered locus">Sala_2473</name>
</gene>
<accession>Q1GQ92</accession>
<dbReference type="EC" id="2.4.2.4" evidence="1"/>
<dbReference type="EMBL" id="CP000356">
    <property type="protein sequence ID" value="ABF54180.1"/>
    <property type="molecule type" value="Genomic_DNA"/>
</dbReference>
<dbReference type="RefSeq" id="WP_011542745.1">
    <property type="nucleotide sequence ID" value="NC_008048.1"/>
</dbReference>
<dbReference type="SMR" id="Q1GQ92"/>
<dbReference type="STRING" id="317655.Sala_2473"/>
<dbReference type="KEGG" id="sal:Sala_2473"/>
<dbReference type="eggNOG" id="COG0213">
    <property type="taxonomic scope" value="Bacteria"/>
</dbReference>
<dbReference type="HOGENOM" id="CLU_025040_6_0_5"/>
<dbReference type="OrthoDB" id="341217at2"/>
<dbReference type="Proteomes" id="UP000006578">
    <property type="component" value="Chromosome"/>
</dbReference>
<dbReference type="GO" id="GO:0005829">
    <property type="term" value="C:cytosol"/>
    <property type="evidence" value="ECO:0007669"/>
    <property type="project" value="TreeGrafter"/>
</dbReference>
<dbReference type="GO" id="GO:0004645">
    <property type="term" value="F:1,4-alpha-oligoglucan phosphorylase activity"/>
    <property type="evidence" value="ECO:0007669"/>
    <property type="project" value="InterPro"/>
</dbReference>
<dbReference type="GO" id="GO:0009032">
    <property type="term" value="F:thymidine phosphorylase activity"/>
    <property type="evidence" value="ECO:0007669"/>
    <property type="project" value="UniProtKB-UniRule"/>
</dbReference>
<dbReference type="GO" id="GO:0006206">
    <property type="term" value="P:pyrimidine nucleobase metabolic process"/>
    <property type="evidence" value="ECO:0007669"/>
    <property type="project" value="InterPro"/>
</dbReference>
<dbReference type="GO" id="GO:0006213">
    <property type="term" value="P:pyrimidine nucleoside metabolic process"/>
    <property type="evidence" value="ECO:0007669"/>
    <property type="project" value="InterPro"/>
</dbReference>
<dbReference type="Gene3D" id="1.20.970.50">
    <property type="match status" value="1"/>
</dbReference>
<dbReference type="Gene3D" id="3.40.1030.10">
    <property type="entry name" value="Nucleoside phosphorylase/phosphoribosyltransferase catalytic domain"/>
    <property type="match status" value="1"/>
</dbReference>
<dbReference type="Gene3D" id="3.90.1170.30">
    <property type="entry name" value="Pyrimidine nucleoside phosphorylase-like, C-terminal domain"/>
    <property type="match status" value="1"/>
</dbReference>
<dbReference type="HAMAP" id="MF_00703">
    <property type="entry name" value="Thymid_phosp_2"/>
    <property type="match status" value="1"/>
</dbReference>
<dbReference type="InterPro" id="IPR000312">
    <property type="entry name" value="Glycosyl_Trfase_fam3"/>
</dbReference>
<dbReference type="InterPro" id="IPR017459">
    <property type="entry name" value="Glycosyl_Trfase_fam3_N_dom"/>
</dbReference>
<dbReference type="InterPro" id="IPR036320">
    <property type="entry name" value="Glycosyl_Trfase_fam3_N_dom_sf"/>
</dbReference>
<dbReference type="InterPro" id="IPR035902">
    <property type="entry name" value="Nuc_phospho_transferase"/>
</dbReference>
<dbReference type="InterPro" id="IPR036566">
    <property type="entry name" value="PYNP-like_C_sf"/>
</dbReference>
<dbReference type="InterPro" id="IPR013102">
    <property type="entry name" value="PYNP_C"/>
</dbReference>
<dbReference type="InterPro" id="IPR017872">
    <property type="entry name" value="Pyrmidine_PPase_CS"/>
</dbReference>
<dbReference type="InterPro" id="IPR028579">
    <property type="entry name" value="Thym_Pase_Put"/>
</dbReference>
<dbReference type="InterPro" id="IPR013466">
    <property type="entry name" value="Thymidine/AMP_Pase"/>
</dbReference>
<dbReference type="InterPro" id="IPR000053">
    <property type="entry name" value="Thymidine/pyrmidine_PPase"/>
</dbReference>
<dbReference type="NCBIfam" id="TIGR02645">
    <property type="entry name" value="ARCH_P_rylase"/>
    <property type="match status" value="1"/>
</dbReference>
<dbReference type="NCBIfam" id="NF003338">
    <property type="entry name" value="PRK04350.1"/>
    <property type="match status" value="1"/>
</dbReference>
<dbReference type="PANTHER" id="PTHR10515">
    <property type="entry name" value="THYMIDINE PHOSPHORYLASE"/>
    <property type="match status" value="1"/>
</dbReference>
<dbReference type="PANTHER" id="PTHR10515:SF0">
    <property type="entry name" value="THYMIDINE PHOSPHORYLASE"/>
    <property type="match status" value="1"/>
</dbReference>
<dbReference type="Pfam" id="PF02885">
    <property type="entry name" value="Glycos_trans_3N"/>
    <property type="match status" value="1"/>
</dbReference>
<dbReference type="Pfam" id="PF00591">
    <property type="entry name" value="Glycos_transf_3"/>
    <property type="match status" value="1"/>
</dbReference>
<dbReference type="Pfam" id="PF07831">
    <property type="entry name" value="PYNP_C"/>
    <property type="match status" value="1"/>
</dbReference>
<dbReference type="SMART" id="SM00941">
    <property type="entry name" value="PYNP_C"/>
    <property type="match status" value="1"/>
</dbReference>
<dbReference type="SUPFAM" id="SSF52418">
    <property type="entry name" value="Nucleoside phosphorylase/phosphoribosyltransferase catalytic domain"/>
    <property type="match status" value="1"/>
</dbReference>
<dbReference type="SUPFAM" id="SSF47648">
    <property type="entry name" value="Nucleoside phosphorylase/phosphoribosyltransferase N-terminal domain"/>
    <property type="match status" value="1"/>
</dbReference>
<dbReference type="SUPFAM" id="SSF54680">
    <property type="entry name" value="Pyrimidine nucleoside phosphorylase C-terminal domain"/>
    <property type="match status" value="1"/>
</dbReference>
<dbReference type="PROSITE" id="PS00647">
    <property type="entry name" value="THYMID_PHOSPHORYLASE"/>
    <property type="match status" value="1"/>
</dbReference>
<name>TYPH_SPHAL</name>
<protein>
    <recommendedName>
        <fullName evidence="1">Putative thymidine phosphorylase</fullName>
        <ecNumber evidence="1">2.4.2.4</ecNumber>
    </recommendedName>
    <alternativeName>
        <fullName evidence="1">TdRPase</fullName>
    </alternativeName>
</protein>
<comment type="catalytic activity">
    <reaction evidence="1">
        <text>thymidine + phosphate = 2-deoxy-alpha-D-ribose 1-phosphate + thymine</text>
        <dbReference type="Rhea" id="RHEA:16037"/>
        <dbReference type="ChEBI" id="CHEBI:17748"/>
        <dbReference type="ChEBI" id="CHEBI:17821"/>
        <dbReference type="ChEBI" id="CHEBI:43474"/>
        <dbReference type="ChEBI" id="CHEBI:57259"/>
        <dbReference type="EC" id="2.4.2.4"/>
    </reaction>
</comment>
<comment type="similarity">
    <text evidence="1">Belongs to the thymidine/pyrimidine-nucleoside phosphorylase family. Type 2 subfamily.</text>
</comment>
<proteinExistence type="inferred from homology"/>
<keyword id="KW-0328">Glycosyltransferase</keyword>
<keyword id="KW-1185">Reference proteome</keyword>
<keyword id="KW-0808">Transferase</keyword>
<evidence type="ECO:0000255" key="1">
    <source>
        <dbReference type="HAMAP-Rule" id="MF_00703"/>
    </source>
</evidence>
<reference key="1">
    <citation type="journal article" date="2009" name="Proc. Natl. Acad. Sci. U.S.A.">
        <title>The genomic basis of trophic strategy in marine bacteria.</title>
        <authorList>
            <person name="Lauro F.M."/>
            <person name="McDougald D."/>
            <person name="Thomas T."/>
            <person name="Williams T.J."/>
            <person name="Egan S."/>
            <person name="Rice S."/>
            <person name="DeMaere M.Z."/>
            <person name="Ting L."/>
            <person name="Ertan H."/>
            <person name="Johnson J."/>
            <person name="Ferriera S."/>
            <person name="Lapidus A."/>
            <person name="Anderson I."/>
            <person name="Kyrpides N."/>
            <person name="Munk A.C."/>
            <person name="Detter C."/>
            <person name="Han C.S."/>
            <person name="Brown M.V."/>
            <person name="Robb F.T."/>
            <person name="Kjelleberg S."/>
            <person name="Cavicchioli R."/>
        </authorList>
    </citation>
    <scope>NUCLEOTIDE SEQUENCE [LARGE SCALE GENOMIC DNA]</scope>
    <source>
        <strain>DSM 13593 / LMG 18877 / RB2256</strain>
    </source>
</reference>